<sequence length="669" mass="76963">MARLVAVVKYSDEDYPFEKRQMPLYIDDSLTMVLEFSDNMLNLDKQQIDTVQLEQFIQRHRMLKEQDLASAMTVTSREVFNALSQLLPCVGCRRCVERLFSQVMQTGIQALDPLSVGANGVLTLSHGFMTDATKLYTLFYMCGSKMNNELDAIAKNKKGKKNNRCKFHSLDVRKPKPVGGHWMDVWEVMSPECRDEVALIDSNCLLETLENYLQKHRFCADCKNKVHRAFNILTGELDFSKVKGYCANVYQGLRCCPHEGHIHLCCETDFIAHVLGRAEPEFAGGYERRERHAKTIDVAQEEVLTCLGIHLYERLHRIWLKLRAEVQTRQMLFYLGVDALRKSFEVTVEKVRGISRMDQYFKDILEEEKVQELKQEKKRQKKNRKKNKSSCDLPTPLETKSANPSQKNEPPGFMESDGNPCNISEDSNMCAEVTVKNEDLLRSHKVKKGLTPHSNVSDCGYSSSLEGSEPGSQEGSDVACAEGICKHDEAGDDKEEEEGDSCVECWNNCTKDNIKGKNKKKKKKCKPFKCENENTLKQVPYNTESSDSVHSNPNEETKVYNFCMDSEFPRRPWIYHRNEFFSDMSSTESQTRFYSGRETKSLKELLDESECSSQEEDEITQDDIQAFKETYQTFYRDRQQFRQCLKENFKQFCLHQNPSLLVGNTGAIN</sequence>
<feature type="chain" id="PRO_0000239353" description="Gametogenetin-binding protein 2">
    <location>
        <begin position="1"/>
        <end position="669"/>
    </location>
</feature>
<feature type="region of interest" description="Disordered" evidence="2">
    <location>
        <begin position="375"/>
        <end position="421"/>
    </location>
</feature>
<feature type="region of interest" description="Disordered" evidence="2">
    <location>
        <begin position="452"/>
        <end position="475"/>
    </location>
</feature>
<feature type="compositionally biased region" description="Basic residues" evidence="2">
    <location>
        <begin position="376"/>
        <end position="388"/>
    </location>
</feature>
<feature type="compositionally biased region" description="Polar residues" evidence="2">
    <location>
        <begin position="398"/>
        <end position="408"/>
    </location>
</feature>
<comment type="function">
    <text evidence="1">May be involved in spermatogenesis.</text>
</comment>
<comment type="subcellular location">
    <subcellularLocation>
        <location evidence="1">Cytoplasm</location>
    </subcellularLocation>
</comment>
<proteinExistence type="evidence at transcript level"/>
<reference key="1">
    <citation type="submission" date="2004-07" db="EMBL/GenBank/DDBJ databases">
        <authorList>
            <consortium name="NIH - Xenopus Gene Collection (XGC) project"/>
        </authorList>
    </citation>
    <scope>NUCLEOTIDE SEQUENCE [LARGE SCALE MRNA]</scope>
    <source>
        <tissue>Embryo</tissue>
    </source>
</reference>
<gene>
    <name type="primary">ggnbp2</name>
    <name type="synonym">znf403</name>
</gene>
<keyword id="KW-0963">Cytoplasm</keyword>
<keyword id="KW-0217">Developmental protein</keyword>
<keyword id="KW-0221">Differentiation</keyword>
<keyword id="KW-1185">Reference proteome</keyword>
<keyword id="KW-0744">Spermatogenesis</keyword>
<organism>
    <name type="scientific">Xenopus tropicalis</name>
    <name type="common">Western clawed frog</name>
    <name type="synonym">Silurana tropicalis</name>
    <dbReference type="NCBI Taxonomy" id="8364"/>
    <lineage>
        <taxon>Eukaryota</taxon>
        <taxon>Metazoa</taxon>
        <taxon>Chordata</taxon>
        <taxon>Craniata</taxon>
        <taxon>Vertebrata</taxon>
        <taxon>Euteleostomi</taxon>
        <taxon>Amphibia</taxon>
        <taxon>Batrachia</taxon>
        <taxon>Anura</taxon>
        <taxon>Pipoidea</taxon>
        <taxon>Pipidae</taxon>
        <taxon>Xenopodinae</taxon>
        <taxon>Xenopus</taxon>
        <taxon>Silurana</taxon>
    </lineage>
</organism>
<dbReference type="EMBL" id="BC076685">
    <property type="protein sequence ID" value="AAH76685.1"/>
    <property type="molecule type" value="mRNA"/>
</dbReference>
<dbReference type="RefSeq" id="NP_001006809.1">
    <property type="nucleotide sequence ID" value="NM_001006808.1"/>
</dbReference>
<dbReference type="RefSeq" id="XP_012815394.1">
    <property type="nucleotide sequence ID" value="XM_012959940.3"/>
</dbReference>
<dbReference type="SMR" id="Q6DFP9"/>
<dbReference type="FunCoup" id="Q6DFP9">
    <property type="interactions" value="4246"/>
</dbReference>
<dbReference type="STRING" id="8364.ENSXETP00000032409"/>
<dbReference type="PaxDb" id="8364-ENSXETP00000004356"/>
<dbReference type="DNASU" id="448520"/>
<dbReference type="GeneID" id="448520"/>
<dbReference type="KEGG" id="xtr:448520"/>
<dbReference type="AGR" id="Xenbase:XB-GENE-942044"/>
<dbReference type="CTD" id="79893"/>
<dbReference type="Xenbase" id="XB-GENE-942044">
    <property type="gene designation" value="ggnbp2"/>
</dbReference>
<dbReference type="eggNOG" id="ENOG502QQ20">
    <property type="taxonomic scope" value="Eukaryota"/>
</dbReference>
<dbReference type="HOGENOM" id="CLU_024870_0_0_1"/>
<dbReference type="InParanoid" id="Q6DFP9"/>
<dbReference type="OMA" id="MMLMDLN"/>
<dbReference type="OrthoDB" id="2422440at2759"/>
<dbReference type="PhylomeDB" id="Q6DFP9"/>
<dbReference type="TreeFam" id="TF323487"/>
<dbReference type="Proteomes" id="UP000008143">
    <property type="component" value="Chromosome 2"/>
</dbReference>
<dbReference type="Bgee" id="ENSXETG00000002038">
    <property type="expression patterns" value="Expressed in testis and 13 other cell types or tissues"/>
</dbReference>
<dbReference type="GO" id="GO:0005737">
    <property type="term" value="C:cytoplasm"/>
    <property type="evidence" value="ECO:0007669"/>
    <property type="project" value="UniProtKB-SubCell"/>
</dbReference>
<dbReference type="GO" id="GO:0030154">
    <property type="term" value="P:cell differentiation"/>
    <property type="evidence" value="ECO:0007669"/>
    <property type="project" value="UniProtKB-KW"/>
</dbReference>
<dbReference type="GO" id="GO:0007283">
    <property type="term" value="P:spermatogenesis"/>
    <property type="evidence" value="ECO:0007669"/>
    <property type="project" value="UniProtKB-KW"/>
</dbReference>
<dbReference type="InterPro" id="IPR026073">
    <property type="entry name" value="GGNBP2"/>
</dbReference>
<dbReference type="PANTHER" id="PTHR13601">
    <property type="entry name" value="GAMETOGENETIN-BINDING PROTEIN 2"/>
    <property type="match status" value="1"/>
</dbReference>
<dbReference type="PANTHER" id="PTHR13601:SF2">
    <property type="entry name" value="GAMETOGENETIN-BINDING PROTEIN 2"/>
    <property type="match status" value="1"/>
</dbReference>
<protein>
    <recommendedName>
        <fullName>Gametogenetin-binding protein 2</fullName>
    </recommendedName>
    <alternativeName>
        <fullName>Protein ZNF403</fullName>
    </alternativeName>
</protein>
<name>GGNB2_XENTR</name>
<accession>Q6DFP9</accession>
<evidence type="ECO:0000250" key="1"/>
<evidence type="ECO:0000256" key="2">
    <source>
        <dbReference type="SAM" id="MobiDB-lite"/>
    </source>
</evidence>